<evidence type="ECO:0000255" key="1">
    <source>
        <dbReference type="PROSITE-ProRule" id="PRU00704"/>
    </source>
</evidence>
<evidence type="ECO:0000305" key="2"/>
<name>GLCT_STAAM</name>
<feature type="chain" id="PRO_0000352608" description="Protein GlcT">
    <location>
        <begin position="1"/>
        <end position="283"/>
    </location>
</feature>
<feature type="domain" description="PRD 1" evidence="1">
    <location>
        <begin position="69"/>
        <end position="173"/>
    </location>
</feature>
<feature type="domain" description="PRD 2" evidence="1">
    <location>
        <begin position="174"/>
        <end position="283"/>
    </location>
</feature>
<accession>Q99UC2</accession>
<organism>
    <name type="scientific">Staphylococcus aureus (strain Mu50 / ATCC 700699)</name>
    <dbReference type="NCBI Taxonomy" id="158878"/>
    <lineage>
        <taxon>Bacteria</taxon>
        <taxon>Bacillati</taxon>
        <taxon>Bacillota</taxon>
        <taxon>Bacilli</taxon>
        <taxon>Bacillales</taxon>
        <taxon>Staphylococcaceae</taxon>
        <taxon>Staphylococcus</taxon>
    </lineage>
</organism>
<reference key="1">
    <citation type="journal article" date="2001" name="Lancet">
        <title>Whole genome sequencing of meticillin-resistant Staphylococcus aureus.</title>
        <authorList>
            <person name="Kuroda M."/>
            <person name="Ohta T."/>
            <person name="Uchiyama I."/>
            <person name="Baba T."/>
            <person name="Yuzawa H."/>
            <person name="Kobayashi I."/>
            <person name="Cui L."/>
            <person name="Oguchi A."/>
            <person name="Aoki K."/>
            <person name="Nagai Y."/>
            <person name="Lian J.-Q."/>
            <person name="Ito T."/>
            <person name="Kanamori M."/>
            <person name="Matsumaru H."/>
            <person name="Maruyama A."/>
            <person name="Murakami H."/>
            <person name="Hosoyama A."/>
            <person name="Mizutani-Ui Y."/>
            <person name="Takahashi N.K."/>
            <person name="Sawano T."/>
            <person name="Inoue R."/>
            <person name="Kaito C."/>
            <person name="Sekimizu K."/>
            <person name="Hirakawa H."/>
            <person name="Kuhara S."/>
            <person name="Goto S."/>
            <person name="Yabuzaki J."/>
            <person name="Kanehisa M."/>
            <person name="Yamashita A."/>
            <person name="Oshima K."/>
            <person name="Furuya K."/>
            <person name="Yoshino C."/>
            <person name="Shiba T."/>
            <person name="Hattori M."/>
            <person name="Ogasawara N."/>
            <person name="Hayashi H."/>
            <person name="Hiramatsu K."/>
        </authorList>
    </citation>
    <scope>NUCLEOTIDE SEQUENCE [LARGE SCALE GENOMIC DNA]</scope>
    <source>
        <strain>Mu50 / ATCC 700699</strain>
    </source>
</reference>
<keyword id="KW-0677">Repeat</keyword>
<dbReference type="EMBL" id="BA000017">
    <property type="protein sequence ID" value="BAB57519.1"/>
    <property type="molecule type" value="Genomic_DNA"/>
</dbReference>
<dbReference type="RefSeq" id="WP_000505015.1">
    <property type="nucleotide sequence ID" value="NC_002758.2"/>
</dbReference>
<dbReference type="SMR" id="Q99UC2"/>
<dbReference type="KEGG" id="sav:SAV1357"/>
<dbReference type="HOGENOM" id="CLU_078802_0_0_9"/>
<dbReference type="PhylomeDB" id="Q99UC2"/>
<dbReference type="Proteomes" id="UP000002481">
    <property type="component" value="Chromosome"/>
</dbReference>
<dbReference type="GO" id="GO:0003723">
    <property type="term" value="F:RNA binding"/>
    <property type="evidence" value="ECO:0007669"/>
    <property type="project" value="InterPro"/>
</dbReference>
<dbReference type="GO" id="GO:0045893">
    <property type="term" value="P:positive regulation of DNA-templated transcription"/>
    <property type="evidence" value="ECO:0007669"/>
    <property type="project" value="InterPro"/>
</dbReference>
<dbReference type="Gene3D" id="1.20.58.1950">
    <property type="match status" value="1"/>
</dbReference>
<dbReference type="Gene3D" id="1.20.890.100">
    <property type="match status" value="1"/>
</dbReference>
<dbReference type="Gene3D" id="2.30.24.10">
    <property type="entry name" value="CAT RNA-binding domain"/>
    <property type="match status" value="1"/>
</dbReference>
<dbReference type="Gene3D" id="1.10.1790.10">
    <property type="entry name" value="PRD domain"/>
    <property type="match status" value="1"/>
</dbReference>
<dbReference type="InterPro" id="IPR050661">
    <property type="entry name" value="BglG_antiterminators"/>
</dbReference>
<dbReference type="InterPro" id="IPR004341">
    <property type="entry name" value="CAT_RNA-bd_dom"/>
</dbReference>
<dbReference type="InterPro" id="IPR036650">
    <property type="entry name" value="CAT_RNA-bd_dom_sf"/>
</dbReference>
<dbReference type="InterPro" id="IPR011608">
    <property type="entry name" value="PRD"/>
</dbReference>
<dbReference type="InterPro" id="IPR036634">
    <property type="entry name" value="PRD_sf"/>
</dbReference>
<dbReference type="InterPro" id="IPR001550">
    <property type="entry name" value="Transcrpt_antitermin_CS"/>
</dbReference>
<dbReference type="NCBIfam" id="NF047357">
    <property type="entry name" value="antiterm_GlcT"/>
    <property type="match status" value="1"/>
</dbReference>
<dbReference type="PANTHER" id="PTHR30185">
    <property type="entry name" value="CRYPTIC BETA-GLUCOSIDE BGL OPERON ANTITERMINATOR"/>
    <property type="match status" value="1"/>
</dbReference>
<dbReference type="PANTHER" id="PTHR30185:SF16">
    <property type="entry name" value="PROTEIN GLCT"/>
    <property type="match status" value="1"/>
</dbReference>
<dbReference type="Pfam" id="PF03123">
    <property type="entry name" value="CAT_RBD"/>
    <property type="match status" value="1"/>
</dbReference>
<dbReference type="Pfam" id="PF00874">
    <property type="entry name" value="PRD"/>
    <property type="match status" value="2"/>
</dbReference>
<dbReference type="SMART" id="SM01061">
    <property type="entry name" value="CAT_RBD"/>
    <property type="match status" value="1"/>
</dbReference>
<dbReference type="SUPFAM" id="SSF63520">
    <property type="entry name" value="PTS-regulatory domain, PRD"/>
    <property type="match status" value="2"/>
</dbReference>
<dbReference type="SUPFAM" id="SSF50151">
    <property type="entry name" value="SacY-like RNA-binding domain"/>
    <property type="match status" value="1"/>
</dbReference>
<dbReference type="PROSITE" id="PS00654">
    <property type="entry name" value="PRD_1"/>
    <property type="match status" value="1"/>
</dbReference>
<dbReference type="PROSITE" id="PS51372">
    <property type="entry name" value="PRD_2"/>
    <property type="match status" value="2"/>
</dbReference>
<sequence>MGEYIVTKTLNNNVVVCTNNDQEVILIGKGIGFNKKEGMALNDQTITIEKIYKLESEQQKAHYKSLVEIADDNVLQVIIDSLNFISNTAMNVDSKQLVVSLTDHIIFAYKRLKQNQVISNPFVMETMQLYSDAYHIAKQVIDQLNAALDVHFPEDEIGFIALHIASNTEDLSMHEMTLINNVIKKGIDIIESDLVTTVDKESLQYQRFIRHVQFLIRRLRRKEYIHAQDDFVSMIKNHYPICYNTAYKILTMIQKQFDVNISESEIIYLTLHIHHFEERINQS</sequence>
<gene>
    <name type="primary">glcT</name>
    <name type="ordered locus">SAV1357</name>
</gene>
<protein>
    <recommendedName>
        <fullName>Protein GlcT</fullName>
    </recommendedName>
</protein>
<proteinExistence type="inferred from homology"/>
<comment type="similarity">
    <text evidence="2">Belongs to the transcriptional antiterminator BglG family. GlcT subfamily.</text>
</comment>